<reference key="1">
    <citation type="journal article" date="1988" name="J. Mol. Biol.">
        <title>Structure and organization of Marchantia polymorpha chloroplast genome. III. Gene organization of the large single copy region from rbcL to trnI(CAU).</title>
        <authorList>
            <person name="Fukuzawa H."/>
            <person name="Kohchi T."/>
            <person name="Sano T."/>
            <person name="Shirai H."/>
            <person name="Umesono K."/>
            <person name="Inokuchi H."/>
            <person name="Ozeki H."/>
            <person name="Ohyama K."/>
        </authorList>
    </citation>
    <scope>NUCLEOTIDE SEQUENCE [GENOMIC DNA]</scope>
</reference>
<reference key="2">
    <citation type="journal article" date="1986" name="Nature">
        <title>Chloroplast gene organization deduced from complete sequence of liverwort Marchantia polymorpha chloroplast DNA.</title>
        <authorList>
            <person name="Ohyama K."/>
            <person name="Fukuzawa H."/>
            <person name="Kohchi T."/>
            <person name="Shirai H."/>
            <person name="Sano T."/>
            <person name="Sano S."/>
            <person name="Umesono K."/>
            <person name="Shiki Y."/>
            <person name="Takeuchi M."/>
            <person name="Chang Z."/>
            <person name="Aota S."/>
            <person name="Inokuchi H."/>
            <person name="Ozeki H."/>
        </authorList>
    </citation>
    <scope>NUCLEOTIDE SEQUENCE [LARGE SCALE GENOMIC DNA]</scope>
</reference>
<proteinExistence type="inferred from homology"/>
<organism>
    <name type="scientific">Marchantia polymorpha</name>
    <name type="common">Common liverwort</name>
    <name type="synonym">Marchantia aquatica</name>
    <dbReference type="NCBI Taxonomy" id="3197"/>
    <lineage>
        <taxon>Eukaryota</taxon>
        <taxon>Viridiplantae</taxon>
        <taxon>Streptophyta</taxon>
        <taxon>Embryophyta</taxon>
        <taxon>Marchantiophyta</taxon>
        <taxon>Marchantiopsida</taxon>
        <taxon>Marchantiidae</taxon>
        <taxon>Marchantiales</taxon>
        <taxon>Marchantiaceae</taxon>
        <taxon>Marchantia</taxon>
    </lineage>
</organism>
<comment type="function">
    <text evidence="1">One of the components of the core complex of photosystem II (PSII). PSII is a light-driven water:plastoquinone oxidoreductase that uses light energy to abstract electrons from H(2)O, generating O(2) and a proton gradient subsequently used for ATP formation. It consists of a core antenna complex that captures photons, and an electron transfer chain that converts photonic excitation into a charge separation.</text>
</comment>
<comment type="subunit">
    <text evidence="1">PSII is composed of 1 copy each of membrane proteins PsbA, PsbB, PsbC, PsbD, PsbE, PsbF, PsbH, PsbI, PsbJ, PsbK, PsbL, PsbM, PsbT, PsbX, PsbY, PsbZ, Psb30/Ycf12, at least 3 peripheral proteins of the oxygen-evolving complex and a large number of cofactors. It forms dimeric complexes.</text>
</comment>
<comment type="subcellular location">
    <subcellularLocation>
        <location evidence="1">Plastid</location>
        <location evidence="1">Chloroplast thylakoid membrane</location>
        <topology evidence="1">Single-pass membrane protein</topology>
    </subcellularLocation>
</comment>
<comment type="similarity">
    <text evidence="1">Belongs to the PsbJ family.</text>
</comment>
<geneLocation type="chloroplast"/>
<gene>
    <name evidence="1" type="primary">psbJ</name>
</gene>
<accession>P12188</accession>
<keyword id="KW-0150">Chloroplast</keyword>
<keyword id="KW-0472">Membrane</keyword>
<keyword id="KW-0602">Photosynthesis</keyword>
<keyword id="KW-0604">Photosystem II</keyword>
<keyword id="KW-0934">Plastid</keyword>
<keyword id="KW-0674">Reaction center</keyword>
<keyword id="KW-0793">Thylakoid</keyword>
<keyword id="KW-0812">Transmembrane</keyword>
<keyword id="KW-1133">Transmembrane helix</keyword>
<sequence length="40" mass="4102">MANTTGRVPLWLIGTVAGILVIGLVGIFFYGSYSGLGSSL</sequence>
<evidence type="ECO:0000255" key="1">
    <source>
        <dbReference type="HAMAP-Rule" id="MF_01305"/>
    </source>
</evidence>
<feature type="chain" id="PRO_0000216600" description="Photosystem II reaction center protein J">
    <location>
        <begin position="1"/>
        <end position="40"/>
    </location>
</feature>
<feature type="transmembrane region" description="Helical" evidence="1">
    <location>
        <begin position="10"/>
        <end position="30"/>
    </location>
</feature>
<protein>
    <recommendedName>
        <fullName evidence="1">Photosystem II reaction center protein J</fullName>
        <shortName evidence="1">PSII-J</shortName>
    </recommendedName>
</protein>
<dbReference type="EMBL" id="X04465">
    <property type="protein sequence ID" value="CAA28098.1"/>
    <property type="molecule type" value="Genomic_DNA"/>
</dbReference>
<dbReference type="PIR" id="S01539">
    <property type="entry name" value="A05047"/>
</dbReference>
<dbReference type="RefSeq" id="NP_039312.1">
    <property type="nucleotide sequence ID" value="NC_001319.1"/>
</dbReference>
<dbReference type="RefSeq" id="YP_009646827.1">
    <property type="nucleotide sequence ID" value="NC_042505.1"/>
</dbReference>
<dbReference type="SMR" id="P12188"/>
<dbReference type="GeneID" id="2702600"/>
<dbReference type="GeneID" id="40386701"/>
<dbReference type="GO" id="GO:0009535">
    <property type="term" value="C:chloroplast thylakoid membrane"/>
    <property type="evidence" value="ECO:0007669"/>
    <property type="project" value="UniProtKB-SubCell"/>
</dbReference>
<dbReference type="GO" id="GO:0009539">
    <property type="term" value="C:photosystem II reaction center"/>
    <property type="evidence" value="ECO:0007669"/>
    <property type="project" value="InterPro"/>
</dbReference>
<dbReference type="GO" id="GO:0015979">
    <property type="term" value="P:photosynthesis"/>
    <property type="evidence" value="ECO:0007669"/>
    <property type="project" value="UniProtKB-UniRule"/>
</dbReference>
<dbReference type="Gene3D" id="6.10.250.2070">
    <property type="match status" value="1"/>
</dbReference>
<dbReference type="HAMAP" id="MF_01305">
    <property type="entry name" value="PSII_PsbJ"/>
    <property type="match status" value="1"/>
</dbReference>
<dbReference type="InterPro" id="IPR002682">
    <property type="entry name" value="PSII_PsbJ"/>
</dbReference>
<dbReference type="InterPro" id="IPR037267">
    <property type="entry name" value="PSII_PsbJ_sf"/>
</dbReference>
<dbReference type="NCBIfam" id="NF002722">
    <property type="entry name" value="PRK02565.1"/>
    <property type="match status" value="1"/>
</dbReference>
<dbReference type="PANTHER" id="PTHR34812">
    <property type="entry name" value="PHOTOSYSTEM II REACTION CENTER PROTEIN J"/>
    <property type="match status" value="1"/>
</dbReference>
<dbReference type="PANTHER" id="PTHR34812:SF3">
    <property type="entry name" value="PHOTOSYSTEM II REACTION CENTER PROTEIN J"/>
    <property type="match status" value="1"/>
</dbReference>
<dbReference type="Pfam" id="PF01788">
    <property type="entry name" value="PsbJ"/>
    <property type="match status" value="1"/>
</dbReference>
<dbReference type="SUPFAM" id="SSF161021">
    <property type="entry name" value="Photosystem II reaction center protein J, PsbJ"/>
    <property type="match status" value="1"/>
</dbReference>
<name>PSBJ_MARPO</name>